<sequence length="81" mass="9123">MKQGIHPDYHPVVFEDSSTGYKFLSGSTATSSETVKWEDGNEYPLIRVEVTSDSHPFYTGKQKFTQADGAVDKFNKKYGLK</sequence>
<organism>
    <name type="scientific">Limosilactobacillus reuteri subsp. reuteri (strain JCM 1112)</name>
    <name type="common">Lactobacillus reuteri</name>
    <dbReference type="NCBI Taxonomy" id="557433"/>
    <lineage>
        <taxon>Bacteria</taxon>
        <taxon>Bacillati</taxon>
        <taxon>Bacillota</taxon>
        <taxon>Bacilli</taxon>
        <taxon>Lactobacillales</taxon>
        <taxon>Lactobacillaceae</taxon>
        <taxon>Limosilactobacillus</taxon>
    </lineage>
</organism>
<accession>B2G5K8</accession>
<name>RL31B_LIMRJ</name>
<keyword id="KW-0687">Ribonucleoprotein</keyword>
<keyword id="KW-0689">Ribosomal protein</keyword>
<gene>
    <name evidence="1" type="primary">rpmE2</name>
    <name type="ordered locus">LAR_0224</name>
</gene>
<proteinExistence type="inferred from homology"/>
<reference key="1">
    <citation type="journal article" date="2008" name="DNA Res.">
        <title>Comparative genome analysis of Lactobacillus reuteri and Lactobacillus fermentum reveal a genomic island for reuterin and cobalamin production.</title>
        <authorList>
            <person name="Morita H."/>
            <person name="Toh H."/>
            <person name="Fukuda S."/>
            <person name="Horikawa H."/>
            <person name="Oshima K."/>
            <person name="Suzuki T."/>
            <person name="Murakami M."/>
            <person name="Hisamatsu S."/>
            <person name="Kato Y."/>
            <person name="Takizawa T."/>
            <person name="Fukuoka H."/>
            <person name="Yoshimura T."/>
            <person name="Itoh K."/>
            <person name="O'Sullivan D.J."/>
            <person name="McKay L.L."/>
            <person name="Ohno H."/>
            <person name="Kikuchi J."/>
            <person name="Masaoka T."/>
            <person name="Hattori M."/>
        </authorList>
    </citation>
    <scope>NUCLEOTIDE SEQUENCE [LARGE SCALE GENOMIC DNA]</scope>
    <source>
        <strain>JCM 1112</strain>
    </source>
</reference>
<evidence type="ECO:0000255" key="1">
    <source>
        <dbReference type="HAMAP-Rule" id="MF_00502"/>
    </source>
</evidence>
<evidence type="ECO:0000305" key="2"/>
<feature type="chain" id="PRO_1000126819" description="Large ribosomal subunit protein bL31B">
    <location>
        <begin position="1"/>
        <end position="81"/>
    </location>
</feature>
<dbReference type="EMBL" id="AP007281">
    <property type="protein sequence ID" value="BAG24740.1"/>
    <property type="molecule type" value="Genomic_DNA"/>
</dbReference>
<dbReference type="RefSeq" id="WP_003665599.1">
    <property type="nucleotide sequence ID" value="NC_010609.1"/>
</dbReference>
<dbReference type="SMR" id="B2G5K8"/>
<dbReference type="KEGG" id="lrf:LAR_0224"/>
<dbReference type="HOGENOM" id="CLU_114306_2_2_9"/>
<dbReference type="GO" id="GO:1990904">
    <property type="term" value="C:ribonucleoprotein complex"/>
    <property type="evidence" value="ECO:0007669"/>
    <property type="project" value="UniProtKB-KW"/>
</dbReference>
<dbReference type="GO" id="GO:0005840">
    <property type="term" value="C:ribosome"/>
    <property type="evidence" value="ECO:0007669"/>
    <property type="project" value="UniProtKB-KW"/>
</dbReference>
<dbReference type="GO" id="GO:0003735">
    <property type="term" value="F:structural constituent of ribosome"/>
    <property type="evidence" value="ECO:0007669"/>
    <property type="project" value="InterPro"/>
</dbReference>
<dbReference type="GO" id="GO:0006412">
    <property type="term" value="P:translation"/>
    <property type="evidence" value="ECO:0007669"/>
    <property type="project" value="UniProtKB-UniRule"/>
</dbReference>
<dbReference type="Gene3D" id="4.10.830.30">
    <property type="entry name" value="Ribosomal protein L31"/>
    <property type="match status" value="1"/>
</dbReference>
<dbReference type="HAMAP" id="MF_00502">
    <property type="entry name" value="Ribosomal_bL31_2"/>
    <property type="match status" value="1"/>
</dbReference>
<dbReference type="InterPro" id="IPR034704">
    <property type="entry name" value="Ribosomal_bL28/bL31-like_sf"/>
</dbReference>
<dbReference type="InterPro" id="IPR002150">
    <property type="entry name" value="Ribosomal_bL31"/>
</dbReference>
<dbReference type="InterPro" id="IPR027493">
    <property type="entry name" value="Ribosomal_bL31_B"/>
</dbReference>
<dbReference type="InterPro" id="IPR042105">
    <property type="entry name" value="Ribosomal_bL31_sf"/>
</dbReference>
<dbReference type="NCBIfam" id="TIGR00105">
    <property type="entry name" value="L31"/>
    <property type="match status" value="1"/>
</dbReference>
<dbReference type="NCBIfam" id="NF002462">
    <property type="entry name" value="PRK01678.1"/>
    <property type="match status" value="1"/>
</dbReference>
<dbReference type="PANTHER" id="PTHR33280">
    <property type="entry name" value="50S RIBOSOMAL PROTEIN L31, CHLOROPLASTIC"/>
    <property type="match status" value="1"/>
</dbReference>
<dbReference type="PANTHER" id="PTHR33280:SF1">
    <property type="entry name" value="LARGE RIBOSOMAL SUBUNIT PROTEIN BL31C"/>
    <property type="match status" value="1"/>
</dbReference>
<dbReference type="Pfam" id="PF01197">
    <property type="entry name" value="Ribosomal_L31"/>
    <property type="match status" value="1"/>
</dbReference>
<dbReference type="PRINTS" id="PR01249">
    <property type="entry name" value="RIBOSOMALL31"/>
</dbReference>
<dbReference type="SUPFAM" id="SSF143800">
    <property type="entry name" value="L28p-like"/>
    <property type="match status" value="1"/>
</dbReference>
<protein>
    <recommendedName>
        <fullName evidence="1">Large ribosomal subunit protein bL31B</fullName>
    </recommendedName>
    <alternativeName>
        <fullName evidence="2">50S ribosomal protein L31 type B</fullName>
    </alternativeName>
</protein>
<comment type="subunit">
    <text evidence="1">Part of the 50S ribosomal subunit.</text>
</comment>
<comment type="similarity">
    <text evidence="1">Belongs to the bacterial ribosomal protein bL31 family. Type B subfamily.</text>
</comment>